<gene>
    <name evidence="4" type="primary">LHFPL6</name>
    <name evidence="4" type="synonym">LHFP</name>
</gene>
<organism>
    <name type="scientific">Homo sapiens</name>
    <name type="common">Human</name>
    <dbReference type="NCBI Taxonomy" id="9606"/>
    <lineage>
        <taxon>Eukaryota</taxon>
        <taxon>Metazoa</taxon>
        <taxon>Chordata</taxon>
        <taxon>Craniata</taxon>
        <taxon>Vertebrata</taxon>
        <taxon>Euteleostomi</taxon>
        <taxon>Mammalia</taxon>
        <taxon>Eutheria</taxon>
        <taxon>Euarchontoglires</taxon>
        <taxon>Primates</taxon>
        <taxon>Haplorrhini</taxon>
        <taxon>Catarrhini</taxon>
        <taxon>Hominidae</taxon>
        <taxon>Homo</taxon>
    </lineage>
</organism>
<keyword id="KW-0160">Chromosomal rearrangement</keyword>
<keyword id="KW-0472">Membrane</keyword>
<keyword id="KW-1267">Proteomics identification</keyword>
<keyword id="KW-1185">Reference proteome</keyword>
<keyword id="KW-0732">Signal</keyword>
<keyword id="KW-0812">Transmembrane</keyword>
<keyword id="KW-1133">Transmembrane helix</keyword>
<evidence type="ECO:0000255" key="1"/>
<evidence type="ECO:0000269" key="2">
    <source>
    </source>
</evidence>
<evidence type="ECO:0000305" key="3"/>
<evidence type="ECO:0000312" key="4">
    <source>
        <dbReference type="HGNC" id="HGNC:6586"/>
    </source>
</evidence>
<comment type="subcellular location">
    <subcellularLocation>
        <location evidence="3">Membrane</location>
        <topology evidence="3">Multi-pass membrane protein</topology>
    </subcellularLocation>
</comment>
<comment type="tissue specificity">
    <text evidence="2">Pancreas, kidney, skeletal muscle, liver, lung brain, heart, colon, small intestine, uterus, testis, prostate, thymus, spleen and placenta.</text>
</comment>
<comment type="disease">
    <text evidence="2">A chromosomal aberration involving LHFP is associated with a subclass of benign mesenchymal tumors known as lipomas. Translocation t(12;13)(q13-q15;q12) with HMGA2 is shown in lipomas.</text>
</comment>
<comment type="similarity">
    <text evidence="3">Belongs to the LHFP family.</text>
</comment>
<comment type="online information" name="Atlas of Genetics and Cytogenetics in Oncology and Haematology">
    <link uri="https://atlasgeneticsoncology.org/gene/248/LHFP"/>
</comment>
<accession>Q9Y693</accession>
<accession>B2R7M2</accession>
<accession>Q53FC0</accession>
<accession>Q96SH5</accession>
<dbReference type="EMBL" id="AF098807">
    <property type="protein sequence ID" value="AAD31386.1"/>
    <property type="molecule type" value="mRNA"/>
</dbReference>
<dbReference type="EMBL" id="AL138685">
    <property type="status" value="NOT_ANNOTATED_CDS"/>
    <property type="molecule type" value="Genomic_DNA"/>
</dbReference>
<dbReference type="EMBL" id="AL136358">
    <property type="status" value="NOT_ANNOTATED_CDS"/>
    <property type="molecule type" value="Genomic_DNA"/>
</dbReference>
<dbReference type="EMBL" id="AL158194">
    <property type="status" value="NOT_ANNOTATED_CDS"/>
    <property type="molecule type" value="Genomic_DNA"/>
</dbReference>
<dbReference type="EMBL" id="CH471075">
    <property type="protein sequence ID" value="EAX08616.1"/>
    <property type="molecule type" value="Genomic_DNA"/>
</dbReference>
<dbReference type="EMBL" id="BC017824">
    <property type="protein sequence ID" value="AAH17824.1"/>
    <property type="molecule type" value="mRNA"/>
</dbReference>
<dbReference type="EMBL" id="AK223369">
    <property type="protein sequence ID" value="BAD97089.1"/>
    <property type="molecule type" value="mRNA"/>
</dbReference>
<dbReference type="EMBL" id="AK313036">
    <property type="protein sequence ID" value="BAG35869.1"/>
    <property type="molecule type" value="mRNA"/>
</dbReference>
<dbReference type="CCDS" id="CCDS9369.1"/>
<dbReference type="RefSeq" id="NP_005771.1">
    <property type="nucleotide sequence ID" value="NM_005780.3"/>
</dbReference>
<dbReference type="RefSeq" id="XP_011533163.1">
    <property type="nucleotide sequence ID" value="XM_011534861.2"/>
</dbReference>
<dbReference type="RefSeq" id="XP_054229964.1">
    <property type="nucleotide sequence ID" value="XM_054373989.1"/>
</dbReference>
<dbReference type="SMR" id="Q9Y693"/>
<dbReference type="BioGRID" id="115483">
    <property type="interactions" value="9"/>
</dbReference>
<dbReference type="FunCoup" id="Q9Y693">
    <property type="interactions" value="214"/>
</dbReference>
<dbReference type="IntAct" id="Q9Y693">
    <property type="interactions" value="6"/>
</dbReference>
<dbReference type="STRING" id="9606.ENSP00000368908"/>
<dbReference type="TCDB" id="1.A.82.1.6">
    <property type="family name" value="the lhfpl tetraspan protein (ltsp) family"/>
</dbReference>
<dbReference type="iPTMnet" id="Q9Y693"/>
<dbReference type="PhosphoSitePlus" id="Q9Y693"/>
<dbReference type="SwissPalm" id="Q9Y693"/>
<dbReference type="BioMuta" id="LHFPL6"/>
<dbReference type="DMDM" id="74753519"/>
<dbReference type="MassIVE" id="Q9Y693"/>
<dbReference type="PaxDb" id="9606-ENSP00000368908"/>
<dbReference type="PeptideAtlas" id="Q9Y693"/>
<dbReference type="ProteomicsDB" id="86627"/>
<dbReference type="Antibodypedia" id="67484">
    <property type="antibodies" value="81 antibodies from 13 providers"/>
</dbReference>
<dbReference type="DNASU" id="10186"/>
<dbReference type="Ensembl" id="ENST00000379589.4">
    <property type="protein sequence ID" value="ENSP00000368908.3"/>
    <property type="gene ID" value="ENSG00000183722.9"/>
</dbReference>
<dbReference type="Ensembl" id="ENST00000648377.1">
    <property type="protein sequence ID" value="ENSP00000496801.1"/>
    <property type="gene ID" value="ENSG00000183722.9"/>
</dbReference>
<dbReference type="GeneID" id="10186"/>
<dbReference type="KEGG" id="hsa:10186"/>
<dbReference type="MANE-Select" id="ENST00000379589.4">
    <property type="protein sequence ID" value="ENSP00000368908.3"/>
    <property type="RefSeq nucleotide sequence ID" value="NM_005780.3"/>
    <property type="RefSeq protein sequence ID" value="NP_005771.1"/>
</dbReference>
<dbReference type="UCSC" id="uc001uxf.4">
    <property type="organism name" value="human"/>
</dbReference>
<dbReference type="AGR" id="HGNC:6586"/>
<dbReference type="CTD" id="10186"/>
<dbReference type="DisGeNET" id="10186"/>
<dbReference type="GeneCards" id="LHFPL6"/>
<dbReference type="HGNC" id="HGNC:6586">
    <property type="gene designation" value="LHFPL6"/>
</dbReference>
<dbReference type="HPA" id="ENSG00000183722">
    <property type="expression patterns" value="Low tissue specificity"/>
</dbReference>
<dbReference type="MIM" id="606710">
    <property type="type" value="gene"/>
</dbReference>
<dbReference type="neXtProt" id="NX_Q9Y693"/>
<dbReference type="OpenTargets" id="ENSG00000183722"/>
<dbReference type="PharmGKB" id="PA30358"/>
<dbReference type="VEuPathDB" id="HostDB:ENSG00000183722"/>
<dbReference type="eggNOG" id="KOG4026">
    <property type="taxonomic scope" value="Eukaryota"/>
</dbReference>
<dbReference type="GeneTree" id="ENSGT00990000203589"/>
<dbReference type="HOGENOM" id="CLU_084868_2_0_1"/>
<dbReference type="InParanoid" id="Q9Y693"/>
<dbReference type="OMA" id="QWRICTV"/>
<dbReference type="OrthoDB" id="9938692at2759"/>
<dbReference type="PAN-GO" id="Q9Y693">
    <property type="GO annotations" value="1 GO annotation based on evolutionary models"/>
</dbReference>
<dbReference type="PhylomeDB" id="Q9Y693"/>
<dbReference type="TreeFam" id="TF321143"/>
<dbReference type="PathwayCommons" id="Q9Y693"/>
<dbReference type="BioGRID-ORCS" id="10186">
    <property type="hits" value="5 hits in 1130 CRISPR screens"/>
</dbReference>
<dbReference type="ChiTaRS" id="LHFPL6">
    <property type="organism name" value="human"/>
</dbReference>
<dbReference type="GeneWiki" id="LHFP"/>
<dbReference type="GenomeRNAi" id="10186"/>
<dbReference type="Pharos" id="Q9Y693">
    <property type="development level" value="Tbio"/>
</dbReference>
<dbReference type="PRO" id="PR:Q9Y693"/>
<dbReference type="Proteomes" id="UP000005640">
    <property type="component" value="Chromosome 13"/>
</dbReference>
<dbReference type="RNAct" id="Q9Y693">
    <property type="molecule type" value="protein"/>
</dbReference>
<dbReference type="Bgee" id="ENSG00000183722">
    <property type="expression patterns" value="Expressed in vena cava and 207 other cell types or tissues"/>
</dbReference>
<dbReference type="ExpressionAtlas" id="Q9Y693">
    <property type="expression patterns" value="baseline and differential"/>
</dbReference>
<dbReference type="GO" id="GO:0016020">
    <property type="term" value="C:membrane"/>
    <property type="evidence" value="ECO:0000318"/>
    <property type="project" value="GO_Central"/>
</dbReference>
<dbReference type="Gene3D" id="1.20.140.150">
    <property type="match status" value="1"/>
</dbReference>
<dbReference type="InterPro" id="IPR019372">
    <property type="entry name" value="LHFPL"/>
</dbReference>
<dbReference type="PANTHER" id="PTHR12489:SF12">
    <property type="entry name" value="LHFPL TETRASPAN SUBFAMILY MEMBER 6 PROTEIN"/>
    <property type="match status" value="1"/>
</dbReference>
<dbReference type="PANTHER" id="PTHR12489">
    <property type="entry name" value="LIPOMA HMGIC FUSION PARTNER-LIKE PROTEIN"/>
    <property type="match status" value="1"/>
</dbReference>
<dbReference type="Pfam" id="PF10242">
    <property type="entry name" value="L_HMGIC_fpl"/>
    <property type="match status" value="1"/>
</dbReference>
<proteinExistence type="evidence at protein level"/>
<name>LHPL6_HUMAN</name>
<reference key="1">
    <citation type="journal article" date="1999" name="Genomics">
        <title>LHFP, a novel translocation partner gene of HMGIC in a lipoma, is a member of a new family of LHFP-like genes.</title>
        <authorList>
            <person name="Petit M.M.R."/>
            <person name="Schoenmakers E.F.P.M."/>
            <person name="Huysmans C."/>
            <person name="Geurts J.M.W."/>
            <person name="Mandahl N."/>
            <person name="Van de Ven W.J.M."/>
        </authorList>
    </citation>
    <scope>NUCLEOTIDE SEQUENCE [MRNA]</scope>
    <scope>TISSUE SPECIFICITY</scope>
    <scope>DISEASE</scope>
</reference>
<reference key="2">
    <citation type="journal article" date="2004" name="Nat. Genet.">
        <title>Complete sequencing and characterization of 21,243 full-length human cDNAs.</title>
        <authorList>
            <person name="Ota T."/>
            <person name="Suzuki Y."/>
            <person name="Nishikawa T."/>
            <person name="Otsuki T."/>
            <person name="Sugiyama T."/>
            <person name="Irie R."/>
            <person name="Wakamatsu A."/>
            <person name="Hayashi K."/>
            <person name="Sato H."/>
            <person name="Nagai K."/>
            <person name="Kimura K."/>
            <person name="Makita H."/>
            <person name="Sekine M."/>
            <person name="Obayashi M."/>
            <person name="Nishi T."/>
            <person name="Shibahara T."/>
            <person name="Tanaka T."/>
            <person name="Ishii S."/>
            <person name="Yamamoto J."/>
            <person name="Saito K."/>
            <person name="Kawai Y."/>
            <person name="Isono Y."/>
            <person name="Nakamura Y."/>
            <person name="Nagahari K."/>
            <person name="Murakami K."/>
            <person name="Yasuda T."/>
            <person name="Iwayanagi T."/>
            <person name="Wagatsuma M."/>
            <person name="Shiratori A."/>
            <person name="Sudo H."/>
            <person name="Hosoiri T."/>
            <person name="Kaku Y."/>
            <person name="Kodaira H."/>
            <person name="Kondo H."/>
            <person name="Sugawara M."/>
            <person name="Takahashi M."/>
            <person name="Kanda K."/>
            <person name="Yokoi T."/>
            <person name="Furuya T."/>
            <person name="Kikkawa E."/>
            <person name="Omura Y."/>
            <person name="Abe K."/>
            <person name="Kamihara K."/>
            <person name="Katsuta N."/>
            <person name="Sato K."/>
            <person name="Tanikawa M."/>
            <person name="Yamazaki M."/>
            <person name="Ninomiya K."/>
            <person name="Ishibashi T."/>
            <person name="Yamashita H."/>
            <person name="Murakawa K."/>
            <person name="Fujimori K."/>
            <person name="Tanai H."/>
            <person name="Kimata M."/>
            <person name="Watanabe M."/>
            <person name="Hiraoka S."/>
            <person name="Chiba Y."/>
            <person name="Ishida S."/>
            <person name="Ono Y."/>
            <person name="Takiguchi S."/>
            <person name="Watanabe S."/>
            <person name="Yosida M."/>
            <person name="Hotuta T."/>
            <person name="Kusano J."/>
            <person name="Kanehori K."/>
            <person name="Takahashi-Fujii A."/>
            <person name="Hara H."/>
            <person name="Tanase T.-O."/>
            <person name="Nomura Y."/>
            <person name="Togiya S."/>
            <person name="Komai F."/>
            <person name="Hara R."/>
            <person name="Takeuchi K."/>
            <person name="Arita M."/>
            <person name="Imose N."/>
            <person name="Musashino K."/>
            <person name="Yuuki H."/>
            <person name="Oshima A."/>
            <person name="Sasaki N."/>
            <person name="Aotsuka S."/>
            <person name="Yoshikawa Y."/>
            <person name="Matsunawa H."/>
            <person name="Ichihara T."/>
            <person name="Shiohata N."/>
            <person name="Sano S."/>
            <person name="Moriya S."/>
            <person name="Momiyama H."/>
            <person name="Satoh N."/>
            <person name="Takami S."/>
            <person name="Terashima Y."/>
            <person name="Suzuki O."/>
            <person name="Nakagawa S."/>
            <person name="Senoh A."/>
            <person name="Mizoguchi H."/>
            <person name="Goto Y."/>
            <person name="Shimizu F."/>
            <person name="Wakebe H."/>
            <person name="Hishigaki H."/>
            <person name="Watanabe T."/>
            <person name="Sugiyama A."/>
            <person name="Takemoto M."/>
            <person name="Kawakami B."/>
            <person name="Yamazaki M."/>
            <person name="Watanabe K."/>
            <person name="Kumagai A."/>
            <person name="Itakura S."/>
            <person name="Fukuzumi Y."/>
            <person name="Fujimori Y."/>
            <person name="Komiyama M."/>
            <person name="Tashiro H."/>
            <person name="Tanigami A."/>
            <person name="Fujiwara T."/>
            <person name="Ono T."/>
            <person name="Yamada K."/>
            <person name="Fujii Y."/>
            <person name="Ozaki K."/>
            <person name="Hirao M."/>
            <person name="Ohmori Y."/>
            <person name="Kawabata A."/>
            <person name="Hikiji T."/>
            <person name="Kobatake N."/>
            <person name="Inagaki H."/>
            <person name="Ikema Y."/>
            <person name="Okamoto S."/>
            <person name="Okitani R."/>
            <person name="Kawakami T."/>
            <person name="Noguchi S."/>
            <person name="Itoh T."/>
            <person name="Shigeta K."/>
            <person name="Senba T."/>
            <person name="Matsumura K."/>
            <person name="Nakajima Y."/>
            <person name="Mizuno T."/>
            <person name="Morinaga M."/>
            <person name="Sasaki M."/>
            <person name="Togashi T."/>
            <person name="Oyama M."/>
            <person name="Hata H."/>
            <person name="Watanabe M."/>
            <person name="Komatsu T."/>
            <person name="Mizushima-Sugano J."/>
            <person name="Satoh T."/>
            <person name="Shirai Y."/>
            <person name="Takahashi Y."/>
            <person name="Nakagawa K."/>
            <person name="Okumura K."/>
            <person name="Nagase T."/>
            <person name="Nomura N."/>
            <person name="Kikuchi H."/>
            <person name="Masuho Y."/>
            <person name="Yamashita R."/>
            <person name="Nakai K."/>
            <person name="Yada T."/>
            <person name="Nakamura Y."/>
            <person name="Ohara O."/>
            <person name="Isogai T."/>
            <person name="Sugano S."/>
        </authorList>
    </citation>
    <scope>NUCLEOTIDE SEQUENCE [LARGE SCALE MRNA]</scope>
    <source>
        <tissue>Amygdala</tissue>
    </source>
</reference>
<reference key="3">
    <citation type="journal article" date="2004" name="Nature">
        <title>The DNA sequence and analysis of human chromosome 13.</title>
        <authorList>
            <person name="Dunham A."/>
            <person name="Matthews L.H."/>
            <person name="Burton J."/>
            <person name="Ashurst J.L."/>
            <person name="Howe K.L."/>
            <person name="Ashcroft K.J."/>
            <person name="Beare D.M."/>
            <person name="Burford D.C."/>
            <person name="Hunt S.E."/>
            <person name="Griffiths-Jones S."/>
            <person name="Jones M.C."/>
            <person name="Keenan S.J."/>
            <person name="Oliver K."/>
            <person name="Scott C.E."/>
            <person name="Ainscough R."/>
            <person name="Almeida J.P."/>
            <person name="Ambrose K.D."/>
            <person name="Andrews D.T."/>
            <person name="Ashwell R.I.S."/>
            <person name="Babbage A.K."/>
            <person name="Bagguley C.L."/>
            <person name="Bailey J."/>
            <person name="Bannerjee R."/>
            <person name="Barlow K.F."/>
            <person name="Bates K."/>
            <person name="Beasley H."/>
            <person name="Bird C.P."/>
            <person name="Bray-Allen S."/>
            <person name="Brown A.J."/>
            <person name="Brown J.Y."/>
            <person name="Burrill W."/>
            <person name="Carder C."/>
            <person name="Carter N.P."/>
            <person name="Chapman J.C."/>
            <person name="Clamp M.E."/>
            <person name="Clark S.Y."/>
            <person name="Clarke G."/>
            <person name="Clee C.M."/>
            <person name="Clegg S.C."/>
            <person name="Cobley V."/>
            <person name="Collins J.E."/>
            <person name="Corby N."/>
            <person name="Coville G.J."/>
            <person name="Deloukas P."/>
            <person name="Dhami P."/>
            <person name="Dunham I."/>
            <person name="Dunn M."/>
            <person name="Earthrowl M.E."/>
            <person name="Ellington A.G."/>
            <person name="Faulkner L."/>
            <person name="Frankish A.G."/>
            <person name="Frankland J."/>
            <person name="French L."/>
            <person name="Garner P."/>
            <person name="Garnett J."/>
            <person name="Gilbert J.G.R."/>
            <person name="Gilson C.J."/>
            <person name="Ghori J."/>
            <person name="Grafham D.V."/>
            <person name="Gribble S.M."/>
            <person name="Griffiths C."/>
            <person name="Hall R.E."/>
            <person name="Hammond S."/>
            <person name="Harley J.L."/>
            <person name="Hart E.A."/>
            <person name="Heath P.D."/>
            <person name="Howden P.J."/>
            <person name="Huckle E.J."/>
            <person name="Hunt P.J."/>
            <person name="Hunt A.R."/>
            <person name="Johnson C."/>
            <person name="Johnson D."/>
            <person name="Kay M."/>
            <person name="Kimberley A.M."/>
            <person name="King A."/>
            <person name="Laird G.K."/>
            <person name="Langford C.J."/>
            <person name="Lawlor S."/>
            <person name="Leongamornlert D.A."/>
            <person name="Lloyd D.M."/>
            <person name="Lloyd C."/>
            <person name="Loveland J.E."/>
            <person name="Lovell J."/>
            <person name="Martin S."/>
            <person name="Mashreghi-Mohammadi M."/>
            <person name="McLaren S.J."/>
            <person name="McMurray A."/>
            <person name="Milne S."/>
            <person name="Moore M.J.F."/>
            <person name="Nickerson T."/>
            <person name="Palmer S.A."/>
            <person name="Pearce A.V."/>
            <person name="Peck A.I."/>
            <person name="Pelan S."/>
            <person name="Phillimore B."/>
            <person name="Porter K.M."/>
            <person name="Rice C.M."/>
            <person name="Searle S."/>
            <person name="Sehra H.K."/>
            <person name="Shownkeen R."/>
            <person name="Skuce C.D."/>
            <person name="Smith M."/>
            <person name="Steward C.A."/>
            <person name="Sycamore N."/>
            <person name="Tester J."/>
            <person name="Thomas D.W."/>
            <person name="Tracey A."/>
            <person name="Tromans A."/>
            <person name="Tubby B."/>
            <person name="Wall M."/>
            <person name="Wallis J.M."/>
            <person name="West A.P."/>
            <person name="Whitehead S.L."/>
            <person name="Willey D.L."/>
            <person name="Wilming L."/>
            <person name="Wray P.W."/>
            <person name="Wright M.W."/>
            <person name="Young L."/>
            <person name="Coulson A."/>
            <person name="Durbin R.M."/>
            <person name="Hubbard T."/>
            <person name="Sulston J.E."/>
            <person name="Beck S."/>
            <person name="Bentley D.R."/>
            <person name="Rogers J."/>
            <person name="Ross M.T."/>
        </authorList>
    </citation>
    <scope>NUCLEOTIDE SEQUENCE [LARGE SCALE GENOMIC DNA]</scope>
</reference>
<reference key="4">
    <citation type="submission" date="2005-07" db="EMBL/GenBank/DDBJ databases">
        <authorList>
            <person name="Mural R.J."/>
            <person name="Istrail S."/>
            <person name="Sutton G.G."/>
            <person name="Florea L."/>
            <person name="Halpern A.L."/>
            <person name="Mobarry C.M."/>
            <person name="Lippert R."/>
            <person name="Walenz B."/>
            <person name="Shatkay H."/>
            <person name="Dew I."/>
            <person name="Miller J.R."/>
            <person name="Flanigan M.J."/>
            <person name="Edwards N.J."/>
            <person name="Bolanos R."/>
            <person name="Fasulo D."/>
            <person name="Halldorsson B.V."/>
            <person name="Hannenhalli S."/>
            <person name="Turner R."/>
            <person name="Yooseph S."/>
            <person name="Lu F."/>
            <person name="Nusskern D.R."/>
            <person name="Shue B.C."/>
            <person name="Zheng X.H."/>
            <person name="Zhong F."/>
            <person name="Delcher A.L."/>
            <person name="Huson D.H."/>
            <person name="Kravitz S.A."/>
            <person name="Mouchard L."/>
            <person name="Reinert K."/>
            <person name="Remington K.A."/>
            <person name="Clark A.G."/>
            <person name="Waterman M.S."/>
            <person name="Eichler E.E."/>
            <person name="Adams M.D."/>
            <person name="Hunkapiller M.W."/>
            <person name="Myers E.W."/>
            <person name="Venter J.C."/>
        </authorList>
    </citation>
    <scope>NUCLEOTIDE SEQUENCE [LARGE SCALE GENOMIC DNA]</scope>
</reference>
<reference key="5">
    <citation type="journal article" date="2004" name="Genome Res.">
        <title>The status, quality, and expansion of the NIH full-length cDNA project: the Mammalian Gene Collection (MGC).</title>
        <authorList>
            <consortium name="The MGC Project Team"/>
        </authorList>
    </citation>
    <scope>NUCLEOTIDE SEQUENCE [LARGE SCALE MRNA]</scope>
    <source>
        <tissue>Lung</tissue>
    </source>
</reference>
<reference key="6">
    <citation type="submission" date="2005-04" db="EMBL/GenBank/DDBJ databases">
        <authorList>
            <person name="Totoki Y."/>
            <person name="Toyoda A."/>
            <person name="Takeda T."/>
            <person name="Sakaki Y."/>
            <person name="Tanaka A."/>
            <person name="Yokoyama S."/>
        </authorList>
    </citation>
    <scope>NUCLEOTIDE SEQUENCE [LARGE SCALE MRNA] OF 141-200</scope>
    <source>
        <tissue>Dermoid cancer</tissue>
    </source>
</reference>
<protein>
    <recommendedName>
        <fullName evidence="4">LHFPL tetraspan subfamily member 6 protein</fullName>
    </recommendedName>
    <alternativeName>
        <fullName evidence="4">Lipoma HMGIC fusion partner</fullName>
    </alternativeName>
</protein>
<feature type="signal peptide" evidence="1">
    <location>
        <begin position="1"/>
        <end position="21"/>
    </location>
</feature>
<feature type="chain" id="PRO_0000244756" description="LHFPL tetraspan subfamily member 6 protein">
    <location>
        <begin position="22"/>
        <end position="200"/>
    </location>
</feature>
<feature type="transmembrane region" description="Helical" evidence="1">
    <location>
        <begin position="84"/>
        <end position="104"/>
    </location>
</feature>
<feature type="transmembrane region" description="Helical" evidence="1">
    <location>
        <begin position="123"/>
        <end position="143"/>
    </location>
</feature>
<feature type="transmembrane region" description="Helical" evidence="1">
    <location>
        <begin position="166"/>
        <end position="186"/>
    </location>
</feature>
<sequence length="200" mass="21598">MASSLTCTGVIWALLSFLCAATSCVGFFMPYWLWGSQLGKPVSFGTFRRCSYPVHDESRQMMVMVEECGRYASFQGIPSAEWRICTIVTGLGCGLLLLVALTALMGCCVSDLISRTVGRVAGGIQFLGGLLIGAGCALYPLGWDSEEVRQTCGYTSGQFDLGKCEIGWAYYCTGAGATAAMLLCTWLACFSGKKQKHYPY</sequence>